<feature type="chain" id="PRO_0000425872" description="Cytochrome P450 CYP71D312">
    <location>
        <begin position="1"/>
        <end position="460"/>
    </location>
</feature>
<feature type="binding site" description="axial binding residue" evidence="1">
    <location>
        <position position="398"/>
    </location>
    <ligand>
        <name>heme</name>
        <dbReference type="ChEBI" id="CHEBI:30413"/>
    </ligand>
    <ligandPart>
        <name>Fe</name>
        <dbReference type="ChEBI" id="CHEBI:18248"/>
    </ligandPart>
</feature>
<accession>H2DH19</accession>
<name>C7D31_PANGI</name>
<organism>
    <name type="scientific">Panax ginseng</name>
    <name type="common">Korean ginseng</name>
    <dbReference type="NCBI Taxonomy" id="4054"/>
    <lineage>
        <taxon>Eukaryota</taxon>
        <taxon>Viridiplantae</taxon>
        <taxon>Streptophyta</taxon>
        <taxon>Embryophyta</taxon>
        <taxon>Tracheophyta</taxon>
        <taxon>Spermatophyta</taxon>
        <taxon>Magnoliopsida</taxon>
        <taxon>eudicotyledons</taxon>
        <taxon>Gunneridae</taxon>
        <taxon>Pentapetalae</taxon>
        <taxon>asterids</taxon>
        <taxon>campanulids</taxon>
        <taxon>Apiales</taxon>
        <taxon>Araliaceae</taxon>
        <taxon>Panax</taxon>
    </lineage>
</organism>
<protein>
    <recommendedName>
        <fullName>Cytochrome P450 CYP71D312</fullName>
        <ecNumber>1.14.-.-</ecNumber>
    </recommendedName>
</protein>
<sequence length="460" mass="51812">MLHLAGTLQITHGLRDLALKHGPLMHLQLGEISAVVVSSARVAKEVLKTHDIAFADRPKLVSTKILLRNEKDLVMSIYGDYWRQMRKLCTVELLNTNKVSFFRSIREEEVWRLVQSIQSSLESPINLSKRFSAFTNAVTCIATIGKRSQLQDELVQVIEDIASLAGGFDVSDLFPSIKLLHVLSGMRPKLQTIRKKLDNIFDNIILEHKENRNRTNKGYGLTGEEDLVDVLLSVQERGGFEFPVTTDDIYGLILNMLIGGTDTSATALEWTMSELIRNPRVLEKVQAEVRQALKGKTTIHENDIQGLSYLKLVIKETLRLHPPLALLLPRLCRDERQIDGYQIPIDTKLIINAWAIGRDPGYWVDAESFEPERFDNISADFNGVNLNYIPFGSGRRMCPGISFGVATVELPLALLLYHFNWKLPFGMKPESLDMSETFGATLKRKNNLCLIATSCIPSNN</sequence>
<evidence type="ECO:0000250" key="1"/>
<evidence type="ECO:0000305" key="2"/>
<comment type="function">
    <text evidence="1">Probable heme-thiolate monooxygenase.</text>
</comment>
<comment type="cofactor">
    <cofactor evidence="1">
        <name>heme</name>
        <dbReference type="ChEBI" id="CHEBI:30413"/>
    </cofactor>
</comment>
<comment type="similarity">
    <text evidence="2">Belongs to the cytochrome P450 family.</text>
</comment>
<proteinExistence type="evidence at transcript level"/>
<keyword id="KW-0349">Heme</keyword>
<keyword id="KW-0408">Iron</keyword>
<keyword id="KW-0479">Metal-binding</keyword>
<keyword id="KW-0503">Monooxygenase</keyword>
<keyword id="KW-0560">Oxidoreductase</keyword>
<dbReference type="EC" id="1.14.-.-"/>
<dbReference type="EMBL" id="JN604540">
    <property type="protein sequence ID" value="AEY75216.1"/>
    <property type="molecule type" value="mRNA"/>
</dbReference>
<dbReference type="SMR" id="H2DH19"/>
<dbReference type="GO" id="GO:0020037">
    <property type="term" value="F:heme binding"/>
    <property type="evidence" value="ECO:0007669"/>
    <property type="project" value="InterPro"/>
</dbReference>
<dbReference type="GO" id="GO:0005506">
    <property type="term" value="F:iron ion binding"/>
    <property type="evidence" value="ECO:0007669"/>
    <property type="project" value="InterPro"/>
</dbReference>
<dbReference type="GO" id="GO:0004497">
    <property type="term" value="F:monooxygenase activity"/>
    <property type="evidence" value="ECO:0007669"/>
    <property type="project" value="UniProtKB-KW"/>
</dbReference>
<dbReference type="GO" id="GO:0016705">
    <property type="term" value="F:oxidoreductase activity, acting on paired donors, with incorporation or reduction of molecular oxygen"/>
    <property type="evidence" value="ECO:0007669"/>
    <property type="project" value="InterPro"/>
</dbReference>
<dbReference type="CDD" id="cd11072">
    <property type="entry name" value="CYP71-like"/>
    <property type="match status" value="1"/>
</dbReference>
<dbReference type="FunFam" id="1.10.630.10:FF:000043">
    <property type="entry name" value="Cytochrome P450 99A2"/>
    <property type="match status" value="1"/>
</dbReference>
<dbReference type="Gene3D" id="1.10.630.10">
    <property type="entry name" value="Cytochrome P450"/>
    <property type="match status" value="1"/>
</dbReference>
<dbReference type="InterPro" id="IPR052306">
    <property type="entry name" value="CYP450_71D"/>
</dbReference>
<dbReference type="InterPro" id="IPR001128">
    <property type="entry name" value="Cyt_P450"/>
</dbReference>
<dbReference type="InterPro" id="IPR017972">
    <property type="entry name" value="Cyt_P450_CS"/>
</dbReference>
<dbReference type="InterPro" id="IPR002401">
    <property type="entry name" value="Cyt_P450_E_grp-I"/>
</dbReference>
<dbReference type="InterPro" id="IPR036396">
    <property type="entry name" value="Cyt_P450_sf"/>
</dbReference>
<dbReference type="PANTHER" id="PTHR47953:SF16">
    <property type="entry name" value="CYTOCHROME P450 71D8"/>
    <property type="match status" value="1"/>
</dbReference>
<dbReference type="PANTHER" id="PTHR47953">
    <property type="entry name" value="OS08G0105600 PROTEIN"/>
    <property type="match status" value="1"/>
</dbReference>
<dbReference type="Pfam" id="PF00067">
    <property type="entry name" value="p450"/>
    <property type="match status" value="1"/>
</dbReference>
<dbReference type="PRINTS" id="PR00463">
    <property type="entry name" value="EP450I"/>
</dbReference>
<dbReference type="PRINTS" id="PR00385">
    <property type="entry name" value="P450"/>
</dbReference>
<dbReference type="SUPFAM" id="SSF48264">
    <property type="entry name" value="Cytochrome P450"/>
    <property type="match status" value="1"/>
</dbReference>
<dbReference type="PROSITE" id="PS00086">
    <property type="entry name" value="CYTOCHROME_P450"/>
    <property type="match status" value="1"/>
</dbReference>
<reference key="1">
    <citation type="journal article" date="2011" name="Plant Cell Physiol.">
        <title>The Cyt P450 enzyme CYP716A47 catalyzes the formation of protopanaxadiol from dammarenediol-II during ginsenoside biosynthesis in Panax ginseng.</title>
        <authorList>
            <person name="Han J.Y."/>
            <person name="Kim H.J."/>
            <person name="Kwon Y.S."/>
            <person name="Choi Y.E."/>
        </authorList>
    </citation>
    <scope>NUCLEOTIDE SEQUENCE [MRNA]</scope>
</reference>